<name>HEM1_METBF</name>
<organism>
    <name type="scientific">Methanosarcina barkeri (strain Fusaro / DSM 804)</name>
    <dbReference type="NCBI Taxonomy" id="269797"/>
    <lineage>
        <taxon>Archaea</taxon>
        <taxon>Methanobacteriati</taxon>
        <taxon>Methanobacteriota</taxon>
        <taxon>Stenosarchaea group</taxon>
        <taxon>Methanomicrobia</taxon>
        <taxon>Methanosarcinales</taxon>
        <taxon>Methanosarcinaceae</taxon>
        <taxon>Methanosarcina</taxon>
    </lineage>
</organism>
<comment type="function">
    <text evidence="1">Catalyzes the NADPH-dependent reduction of glutamyl-tRNA(Glu) to glutamate 1-semialdehyde (GSA).</text>
</comment>
<comment type="catalytic activity">
    <reaction evidence="1">
        <text>(S)-4-amino-5-oxopentanoate + tRNA(Glu) + NADP(+) = L-glutamyl-tRNA(Glu) + NADPH + H(+)</text>
        <dbReference type="Rhea" id="RHEA:12344"/>
        <dbReference type="Rhea" id="RHEA-COMP:9663"/>
        <dbReference type="Rhea" id="RHEA-COMP:9680"/>
        <dbReference type="ChEBI" id="CHEBI:15378"/>
        <dbReference type="ChEBI" id="CHEBI:57501"/>
        <dbReference type="ChEBI" id="CHEBI:57783"/>
        <dbReference type="ChEBI" id="CHEBI:58349"/>
        <dbReference type="ChEBI" id="CHEBI:78442"/>
        <dbReference type="ChEBI" id="CHEBI:78520"/>
        <dbReference type="EC" id="1.2.1.70"/>
    </reaction>
</comment>
<comment type="pathway">
    <text evidence="1">Porphyrin-containing compound metabolism; protoporphyrin-IX biosynthesis; 5-aminolevulinate from L-glutamyl-tRNA(Glu): step 1/2.</text>
</comment>
<comment type="subunit">
    <text evidence="1">Homodimer.</text>
</comment>
<comment type="domain">
    <text evidence="1">Possesses an unusual extended V-shaped dimeric structure with each monomer consisting of three distinct domains arranged along a curved 'spinal' alpha-helix. The N-terminal catalytic domain specifically recognizes the glutamate moiety of the substrate. The second domain is the NADPH-binding domain, and the third C-terminal domain is responsible for dimerization.</text>
</comment>
<comment type="miscellaneous">
    <text evidence="1">During catalysis, the active site Cys acts as a nucleophile attacking the alpha-carbonyl group of tRNA-bound glutamate with the formation of a thioester intermediate between enzyme and glutamate, and the concomitant release of tRNA(Glu). The thioester intermediate is finally reduced by direct hydride transfer from NADPH, to form the product GSA.</text>
</comment>
<comment type="similarity">
    <text evidence="1">Belongs to the glutamyl-tRNA reductase family.</text>
</comment>
<reference key="1">
    <citation type="journal article" date="2006" name="J. Bacteriol.">
        <title>The Methanosarcina barkeri genome: comparative analysis with Methanosarcina acetivorans and Methanosarcina mazei reveals extensive rearrangement within methanosarcinal genomes.</title>
        <authorList>
            <person name="Maeder D.L."/>
            <person name="Anderson I."/>
            <person name="Brettin T.S."/>
            <person name="Bruce D.C."/>
            <person name="Gilna P."/>
            <person name="Han C.S."/>
            <person name="Lapidus A."/>
            <person name="Metcalf W.W."/>
            <person name="Saunders E."/>
            <person name="Tapia R."/>
            <person name="Sowers K.R."/>
        </authorList>
    </citation>
    <scope>NUCLEOTIDE SEQUENCE [LARGE SCALE GENOMIC DNA]</scope>
    <source>
        <strain>Fusaro / DSM 804</strain>
    </source>
</reference>
<gene>
    <name evidence="1" type="primary">hemA</name>
    <name type="ordered locus">Mbar_A1462</name>
</gene>
<keyword id="KW-0521">NADP</keyword>
<keyword id="KW-0560">Oxidoreductase</keyword>
<keyword id="KW-0627">Porphyrin biosynthesis</keyword>
<evidence type="ECO:0000255" key="1">
    <source>
        <dbReference type="HAMAP-Rule" id="MF_00087"/>
    </source>
</evidence>
<dbReference type="EC" id="1.2.1.70" evidence="1"/>
<dbReference type="EMBL" id="CP000099">
    <property type="protein sequence ID" value="AAZ70419.1"/>
    <property type="molecule type" value="Genomic_DNA"/>
</dbReference>
<dbReference type="SMR" id="Q46CH3"/>
<dbReference type="STRING" id="269797.Mbar_A1462"/>
<dbReference type="PaxDb" id="269797-Mbar_A1462"/>
<dbReference type="KEGG" id="mba:Mbar_A1462"/>
<dbReference type="eggNOG" id="arCOG01036">
    <property type="taxonomic scope" value="Archaea"/>
</dbReference>
<dbReference type="HOGENOM" id="CLU_035113_0_0_2"/>
<dbReference type="OrthoDB" id="4562at2157"/>
<dbReference type="UniPathway" id="UPA00251">
    <property type="reaction ID" value="UER00316"/>
</dbReference>
<dbReference type="GO" id="GO:0008883">
    <property type="term" value="F:glutamyl-tRNA reductase activity"/>
    <property type="evidence" value="ECO:0007669"/>
    <property type="project" value="UniProtKB-UniRule"/>
</dbReference>
<dbReference type="GO" id="GO:0050661">
    <property type="term" value="F:NADP binding"/>
    <property type="evidence" value="ECO:0007669"/>
    <property type="project" value="InterPro"/>
</dbReference>
<dbReference type="GO" id="GO:0019353">
    <property type="term" value="P:protoporphyrinogen IX biosynthetic process from glutamate"/>
    <property type="evidence" value="ECO:0007669"/>
    <property type="project" value="TreeGrafter"/>
</dbReference>
<dbReference type="CDD" id="cd05213">
    <property type="entry name" value="NAD_bind_Glutamyl_tRNA_reduct"/>
    <property type="match status" value="1"/>
</dbReference>
<dbReference type="FunFam" id="3.30.460.30:FF:000001">
    <property type="entry name" value="Glutamyl-tRNA reductase"/>
    <property type="match status" value="1"/>
</dbReference>
<dbReference type="FunFam" id="3.40.50.720:FF:000031">
    <property type="entry name" value="Glutamyl-tRNA reductase"/>
    <property type="match status" value="1"/>
</dbReference>
<dbReference type="Gene3D" id="3.30.460.30">
    <property type="entry name" value="Glutamyl-tRNA reductase, N-terminal domain"/>
    <property type="match status" value="1"/>
</dbReference>
<dbReference type="Gene3D" id="3.40.50.720">
    <property type="entry name" value="NAD(P)-binding Rossmann-like Domain"/>
    <property type="match status" value="1"/>
</dbReference>
<dbReference type="HAMAP" id="MF_00087">
    <property type="entry name" value="Glu_tRNA_reductase"/>
    <property type="match status" value="1"/>
</dbReference>
<dbReference type="InterPro" id="IPR000343">
    <property type="entry name" value="4pyrrol_synth_GluRdtase"/>
</dbReference>
<dbReference type="InterPro" id="IPR015896">
    <property type="entry name" value="4pyrrol_synth_GluRdtase_dimer"/>
</dbReference>
<dbReference type="InterPro" id="IPR015895">
    <property type="entry name" value="4pyrrol_synth_GluRdtase_N"/>
</dbReference>
<dbReference type="InterPro" id="IPR018214">
    <property type="entry name" value="GluRdtase_CS"/>
</dbReference>
<dbReference type="InterPro" id="IPR036453">
    <property type="entry name" value="GluRdtase_dimer_dom_sf"/>
</dbReference>
<dbReference type="InterPro" id="IPR036343">
    <property type="entry name" value="GluRdtase_N_sf"/>
</dbReference>
<dbReference type="InterPro" id="IPR036291">
    <property type="entry name" value="NAD(P)-bd_dom_sf"/>
</dbReference>
<dbReference type="InterPro" id="IPR006151">
    <property type="entry name" value="Shikm_DH/Glu-tRNA_Rdtase"/>
</dbReference>
<dbReference type="NCBIfam" id="TIGR01035">
    <property type="entry name" value="hemA"/>
    <property type="match status" value="1"/>
</dbReference>
<dbReference type="PANTHER" id="PTHR43013">
    <property type="entry name" value="GLUTAMYL-TRNA REDUCTASE"/>
    <property type="match status" value="1"/>
</dbReference>
<dbReference type="PANTHER" id="PTHR43013:SF1">
    <property type="entry name" value="GLUTAMYL-TRNA REDUCTASE"/>
    <property type="match status" value="1"/>
</dbReference>
<dbReference type="Pfam" id="PF00745">
    <property type="entry name" value="GlutR_dimer"/>
    <property type="match status" value="1"/>
</dbReference>
<dbReference type="Pfam" id="PF05201">
    <property type="entry name" value="GlutR_N"/>
    <property type="match status" value="1"/>
</dbReference>
<dbReference type="Pfam" id="PF01488">
    <property type="entry name" value="Shikimate_DH"/>
    <property type="match status" value="1"/>
</dbReference>
<dbReference type="PIRSF" id="PIRSF000445">
    <property type="entry name" value="4pyrrol_synth_GluRdtase"/>
    <property type="match status" value="1"/>
</dbReference>
<dbReference type="SUPFAM" id="SSF69742">
    <property type="entry name" value="Glutamyl tRNA-reductase catalytic, N-terminal domain"/>
    <property type="match status" value="1"/>
</dbReference>
<dbReference type="SUPFAM" id="SSF69075">
    <property type="entry name" value="Glutamyl tRNA-reductase dimerization domain"/>
    <property type="match status" value="1"/>
</dbReference>
<dbReference type="SUPFAM" id="SSF51735">
    <property type="entry name" value="NAD(P)-binding Rossmann-fold domains"/>
    <property type="match status" value="1"/>
</dbReference>
<dbReference type="PROSITE" id="PS00747">
    <property type="entry name" value="GLUTR"/>
    <property type="match status" value="1"/>
</dbReference>
<sequence length="449" mass="50081">MTEISSMVISHKKAKIEEMESAWHGDLDGLLHNLYNHEYIHECVVLKTCNRVEIYVVSPSSSILFSFAKEMGASTHIIDFYGHDESLEHLLRLAGGLESMIVGEDQILGQIKELYAYSKKAGTTGKILDTAFDKAIQVGKRIRNETRINKGSVSIGSAAVDLAEEILDGLAGKSVLVIGAGEIGVLVAKALAAKDIEAIYIANRTFKKAEELAYELGGYAVKLNDVQTQLKNADVVISGTGAPHYILTREIVEKAIEERDKTRKLLLIDIANPRDIEESVAELDNVKLCNIDNLRVISEKTLKMRKEEAKKAEAIIQEEIKLLNLQYKRQRADKIISDLYKQIYDVRIREREKAVNRLCAYHTIGKIETDVLDDLTHSIANKILAEPTKVLRQAAELGNDEFLDVAARIFCLEKDKVKAEKIKSDCGIKVEKMKPDCESATDRVSEKGN</sequence>
<proteinExistence type="inferred from homology"/>
<protein>
    <recommendedName>
        <fullName evidence="1">Glutamyl-tRNA reductase</fullName>
        <shortName evidence="1">GluTR</shortName>
        <ecNumber evidence="1">1.2.1.70</ecNumber>
    </recommendedName>
</protein>
<feature type="chain" id="PRO_1000004636" description="Glutamyl-tRNA reductase">
    <location>
        <begin position="1"/>
        <end position="449"/>
    </location>
</feature>
<feature type="active site" description="Nucleophile" evidence="1">
    <location>
        <position position="49"/>
    </location>
</feature>
<feature type="binding site" evidence="1">
    <location>
        <begin position="48"/>
        <end position="51"/>
    </location>
    <ligand>
        <name>substrate</name>
    </ligand>
</feature>
<feature type="binding site" evidence="1">
    <location>
        <position position="99"/>
    </location>
    <ligand>
        <name>substrate</name>
    </ligand>
</feature>
<feature type="binding site" evidence="1">
    <location>
        <begin position="104"/>
        <end position="106"/>
    </location>
    <ligand>
        <name>substrate</name>
    </ligand>
</feature>
<feature type="binding site" evidence="1">
    <location>
        <position position="110"/>
    </location>
    <ligand>
        <name>substrate</name>
    </ligand>
</feature>
<feature type="binding site" evidence="1">
    <location>
        <begin position="179"/>
        <end position="184"/>
    </location>
    <ligand>
        <name>NADP(+)</name>
        <dbReference type="ChEBI" id="CHEBI:58349"/>
    </ligand>
</feature>
<feature type="site" description="Important for activity" evidence="1">
    <location>
        <position position="89"/>
    </location>
</feature>
<accession>Q46CH3</accession>